<sequence>MSSNSFLTPRIVEVHNISPLHAKVVMEPFEHGFGYTLGNALRRVLLSSIPGCAPTKVSISGVVHEYSTIDGLQEDVVDLILNLKGVVLKLHNNKTQSVLTLKKSSEGIVTAGDIEATHDVEIVNPDHVIAHITSGGKIEAQITVEKGRGYWPSANRSKEDKSSSSIGDILLDASFSPIRRVSYAVESARVEQRTDLDKLIIDIETNGSVDPEEAIRYAAKVLVEQFSFFADLESTPLPTEQPKAPVIDPILLRPVDDLELTVRSANCLKVENIFYIGDLIQRTEAELLRTPNLGRKSLNEIKEVLASRDLSLGMKLENWPPANLENYIKEPGHASS</sequence>
<dbReference type="EC" id="2.7.7.6" evidence="1"/>
<dbReference type="EMBL" id="AL954747">
    <property type="protein sequence ID" value="CAD84337.1"/>
    <property type="molecule type" value="Genomic_DNA"/>
</dbReference>
<dbReference type="RefSeq" id="WP_011111061.1">
    <property type="nucleotide sequence ID" value="NC_004757.1"/>
</dbReference>
<dbReference type="SMR" id="Q82X69"/>
<dbReference type="STRING" id="228410.NE0426"/>
<dbReference type="GeneID" id="87103633"/>
<dbReference type="KEGG" id="neu:NE0426"/>
<dbReference type="eggNOG" id="COG0202">
    <property type="taxonomic scope" value="Bacteria"/>
</dbReference>
<dbReference type="HOGENOM" id="CLU_053084_0_0_4"/>
<dbReference type="OrthoDB" id="9805706at2"/>
<dbReference type="PhylomeDB" id="Q82X69"/>
<dbReference type="Proteomes" id="UP000001416">
    <property type="component" value="Chromosome"/>
</dbReference>
<dbReference type="GO" id="GO:0005737">
    <property type="term" value="C:cytoplasm"/>
    <property type="evidence" value="ECO:0007669"/>
    <property type="project" value="UniProtKB-ARBA"/>
</dbReference>
<dbReference type="GO" id="GO:0000428">
    <property type="term" value="C:DNA-directed RNA polymerase complex"/>
    <property type="evidence" value="ECO:0007669"/>
    <property type="project" value="UniProtKB-KW"/>
</dbReference>
<dbReference type="GO" id="GO:0003677">
    <property type="term" value="F:DNA binding"/>
    <property type="evidence" value="ECO:0007669"/>
    <property type="project" value="UniProtKB-UniRule"/>
</dbReference>
<dbReference type="GO" id="GO:0003899">
    <property type="term" value="F:DNA-directed RNA polymerase activity"/>
    <property type="evidence" value="ECO:0007669"/>
    <property type="project" value="UniProtKB-UniRule"/>
</dbReference>
<dbReference type="GO" id="GO:0046983">
    <property type="term" value="F:protein dimerization activity"/>
    <property type="evidence" value="ECO:0007669"/>
    <property type="project" value="InterPro"/>
</dbReference>
<dbReference type="GO" id="GO:0006351">
    <property type="term" value="P:DNA-templated transcription"/>
    <property type="evidence" value="ECO:0007669"/>
    <property type="project" value="UniProtKB-UniRule"/>
</dbReference>
<dbReference type="CDD" id="cd06928">
    <property type="entry name" value="RNAP_alpha_NTD"/>
    <property type="match status" value="1"/>
</dbReference>
<dbReference type="FunFam" id="1.10.150.20:FF:000001">
    <property type="entry name" value="DNA-directed RNA polymerase subunit alpha"/>
    <property type="match status" value="1"/>
</dbReference>
<dbReference type="FunFam" id="2.170.120.12:FF:000001">
    <property type="entry name" value="DNA-directed RNA polymerase subunit alpha"/>
    <property type="match status" value="1"/>
</dbReference>
<dbReference type="Gene3D" id="1.10.150.20">
    <property type="entry name" value="5' to 3' exonuclease, C-terminal subdomain"/>
    <property type="match status" value="1"/>
</dbReference>
<dbReference type="Gene3D" id="2.170.120.12">
    <property type="entry name" value="DNA-directed RNA polymerase, insert domain"/>
    <property type="match status" value="1"/>
</dbReference>
<dbReference type="Gene3D" id="3.30.1360.10">
    <property type="entry name" value="RNA polymerase, RBP11-like subunit"/>
    <property type="match status" value="1"/>
</dbReference>
<dbReference type="HAMAP" id="MF_00059">
    <property type="entry name" value="RNApol_bact_RpoA"/>
    <property type="match status" value="1"/>
</dbReference>
<dbReference type="InterPro" id="IPR011262">
    <property type="entry name" value="DNA-dir_RNA_pol_insert"/>
</dbReference>
<dbReference type="InterPro" id="IPR011263">
    <property type="entry name" value="DNA-dir_RNA_pol_RpoA/D/Rpb3"/>
</dbReference>
<dbReference type="InterPro" id="IPR011773">
    <property type="entry name" value="DNA-dir_RpoA"/>
</dbReference>
<dbReference type="InterPro" id="IPR036603">
    <property type="entry name" value="RBP11-like"/>
</dbReference>
<dbReference type="InterPro" id="IPR011260">
    <property type="entry name" value="RNAP_asu_C"/>
</dbReference>
<dbReference type="InterPro" id="IPR036643">
    <property type="entry name" value="RNApol_insert_sf"/>
</dbReference>
<dbReference type="NCBIfam" id="NF003513">
    <property type="entry name" value="PRK05182.1-2"/>
    <property type="match status" value="1"/>
</dbReference>
<dbReference type="NCBIfam" id="NF003519">
    <property type="entry name" value="PRK05182.2-5"/>
    <property type="match status" value="1"/>
</dbReference>
<dbReference type="NCBIfam" id="TIGR02027">
    <property type="entry name" value="rpoA"/>
    <property type="match status" value="1"/>
</dbReference>
<dbReference type="Pfam" id="PF01000">
    <property type="entry name" value="RNA_pol_A_bac"/>
    <property type="match status" value="1"/>
</dbReference>
<dbReference type="Pfam" id="PF03118">
    <property type="entry name" value="RNA_pol_A_CTD"/>
    <property type="match status" value="1"/>
</dbReference>
<dbReference type="Pfam" id="PF01193">
    <property type="entry name" value="RNA_pol_L"/>
    <property type="match status" value="1"/>
</dbReference>
<dbReference type="SMART" id="SM00662">
    <property type="entry name" value="RPOLD"/>
    <property type="match status" value="1"/>
</dbReference>
<dbReference type="SUPFAM" id="SSF47789">
    <property type="entry name" value="C-terminal domain of RNA polymerase alpha subunit"/>
    <property type="match status" value="1"/>
</dbReference>
<dbReference type="SUPFAM" id="SSF56553">
    <property type="entry name" value="Insert subdomain of RNA polymerase alpha subunit"/>
    <property type="match status" value="1"/>
</dbReference>
<dbReference type="SUPFAM" id="SSF55257">
    <property type="entry name" value="RBP11-like subunits of RNA polymerase"/>
    <property type="match status" value="1"/>
</dbReference>
<name>RPOA_NITEU</name>
<organism>
    <name type="scientific">Nitrosomonas europaea (strain ATCC 19718 / CIP 103999 / KCTC 2705 / NBRC 14298)</name>
    <dbReference type="NCBI Taxonomy" id="228410"/>
    <lineage>
        <taxon>Bacteria</taxon>
        <taxon>Pseudomonadati</taxon>
        <taxon>Pseudomonadota</taxon>
        <taxon>Betaproteobacteria</taxon>
        <taxon>Nitrosomonadales</taxon>
        <taxon>Nitrosomonadaceae</taxon>
        <taxon>Nitrosomonas</taxon>
    </lineage>
</organism>
<keyword id="KW-0240">DNA-directed RNA polymerase</keyword>
<keyword id="KW-0548">Nucleotidyltransferase</keyword>
<keyword id="KW-1185">Reference proteome</keyword>
<keyword id="KW-0804">Transcription</keyword>
<keyword id="KW-0808">Transferase</keyword>
<comment type="function">
    <text evidence="1">DNA-dependent RNA polymerase catalyzes the transcription of DNA into RNA using the four ribonucleoside triphosphates as substrates.</text>
</comment>
<comment type="catalytic activity">
    <reaction evidence="1">
        <text>RNA(n) + a ribonucleoside 5'-triphosphate = RNA(n+1) + diphosphate</text>
        <dbReference type="Rhea" id="RHEA:21248"/>
        <dbReference type="Rhea" id="RHEA-COMP:14527"/>
        <dbReference type="Rhea" id="RHEA-COMP:17342"/>
        <dbReference type="ChEBI" id="CHEBI:33019"/>
        <dbReference type="ChEBI" id="CHEBI:61557"/>
        <dbReference type="ChEBI" id="CHEBI:140395"/>
        <dbReference type="EC" id="2.7.7.6"/>
    </reaction>
</comment>
<comment type="subunit">
    <text evidence="1">Homodimer. The RNAP catalytic core consists of 2 alpha, 1 beta, 1 beta' and 1 omega subunit. When a sigma factor is associated with the core the holoenzyme is formed, which can initiate transcription.</text>
</comment>
<comment type="domain">
    <text evidence="1">The N-terminal domain is essential for RNAP assembly and basal transcription, whereas the C-terminal domain is involved in interaction with transcriptional regulators and with upstream promoter elements.</text>
</comment>
<comment type="similarity">
    <text evidence="1">Belongs to the RNA polymerase alpha chain family.</text>
</comment>
<feature type="chain" id="PRO_0000175348" description="DNA-directed RNA polymerase subunit alpha">
    <location>
        <begin position="1"/>
        <end position="336"/>
    </location>
</feature>
<feature type="region of interest" description="Alpha N-terminal domain (alpha-NTD)" evidence="1">
    <location>
        <begin position="1"/>
        <end position="233"/>
    </location>
</feature>
<feature type="region of interest" description="Alpha C-terminal domain (alpha-CTD)" evidence="1">
    <location>
        <begin position="247"/>
        <end position="336"/>
    </location>
</feature>
<reference key="1">
    <citation type="journal article" date="2003" name="J. Bacteriol.">
        <title>Complete genome sequence of the ammonia-oxidizing bacterium and obligate chemolithoautotroph Nitrosomonas europaea.</title>
        <authorList>
            <person name="Chain P."/>
            <person name="Lamerdin J.E."/>
            <person name="Larimer F.W."/>
            <person name="Regala W."/>
            <person name="Lao V."/>
            <person name="Land M.L."/>
            <person name="Hauser L."/>
            <person name="Hooper A.B."/>
            <person name="Klotz M.G."/>
            <person name="Norton J."/>
            <person name="Sayavedra-Soto L.A."/>
            <person name="Arciero D.M."/>
            <person name="Hommes N.G."/>
            <person name="Whittaker M.M."/>
            <person name="Arp D.J."/>
        </authorList>
    </citation>
    <scope>NUCLEOTIDE SEQUENCE [LARGE SCALE GENOMIC DNA]</scope>
    <source>
        <strain>ATCC 19718 / CIP 103999 / KCTC 2705 / NBRC 14298</strain>
    </source>
</reference>
<evidence type="ECO:0000255" key="1">
    <source>
        <dbReference type="HAMAP-Rule" id="MF_00059"/>
    </source>
</evidence>
<protein>
    <recommendedName>
        <fullName evidence="1">DNA-directed RNA polymerase subunit alpha</fullName>
        <shortName evidence="1">RNAP subunit alpha</shortName>
        <ecNumber evidence="1">2.7.7.6</ecNumber>
    </recommendedName>
    <alternativeName>
        <fullName evidence="1">RNA polymerase subunit alpha</fullName>
    </alternativeName>
    <alternativeName>
        <fullName evidence="1">Transcriptase subunit alpha</fullName>
    </alternativeName>
</protein>
<proteinExistence type="inferred from homology"/>
<accession>Q82X69</accession>
<gene>
    <name evidence="1" type="primary">rpoA</name>
    <name type="ordered locus">NE0426</name>
</gene>